<organism>
    <name type="scientific">Tolumonas auensis (strain DSM 9187 / NBRC 110442 / TA 4)</name>
    <dbReference type="NCBI Taxonomy" id="595494"/>
    <lineage>
        <taxon>Bacteria</taxon>
        <taxon>Pseudomonadati</taxon>
        <taxon>Pseudomonadota</taxon>
        <taxon>Gammaproteobacteria</taxon>
        <taxon>Aeromonadales</taxon>
        <taxon>Aeromonadaceae</taxon>
        <taxon>Tolumonas</taxon>
    </lineage>
</organism>
<evidence type="ECO:0000255" key="1">
    <source>
        <dbReference type="HAMAP-Rule" id="MF_01200"/>
    </source>
</evidence>
<sequence length="232" mass="25215">MTEPKVIVALDFAKKEEALSFVDQVTPSDCRLKIGKEMFTYYGPQFVEQLVKKGFDVFLDLKFHDIPTTVAKAVKASAEMGVWMVNVHASGGRKMMEAARSALLPYGDKAPLLIAVTVLTSMEQSDLADIGLDIPPFEQVLRLATLTQQAGLDGVVCSAQEASVLKSRLGNEFKLITPGIRLDVSTKVDDQSRVMTPVDAIKAGADYLVIGRPVTQAAHPLDVLRKINLSLA</sequence>
<proteinExistence type="inferred from homology"/>
<dbReference type="EC" id="4.1.1.23" evidence="1"/>
<dbReference type="EMBL" id="CP001616">
    <property type="protein sequence ID" value="ACQ93164.1"/>
    <property type="molecule type" value="Genomic_DNA"/>
</dbReference>
<dbReference type="RefSeq" id="WP_015878635.1">
    <property type="nucleotide sequence ID" value="NC_012691.1"/>
</dbReference>
<dbReference type="SMR" id="C4LEZ7"/>
<dbReference type="STRING" id="595494.Tola_1553"/>
<dbReference type="KEGG" id="tau:Tola_1553"/>
<dbReference type="eggNOG" id="COG0284">
    <property type="taxonomic scope" value="Bacteria"/>
</dbReference>
<dbReference type="HOGENOM" id="CLU_067069_0_0_6"/>
<dbReference type="OrthoDB" id="9806203at2"/>
<dbReference type="UniPathway" id="UPA00070">
    <property type="reaction ID" value="UER00120"/>
</dbReference>
<dbReference type="Proteomes" id="UP000009073">
    <property type="component" value="Chromosome"/>
</dbReference>
<dbReference type="GO" id="GO:0005829">
    <property type="term" value="C:cytosol"/>
    <property type="evidence" value="ECO:0007669"/>
    <property type="project" value="TreeGrafter"/>
</dbReference>
<dbReference type="GO" id="GO:0004590">
    <property type="term" value="F:orotidine-5'-phosphate decarboxylase activity"/>
    <property type="evidence" value="ECO:0007669"/>
    <property type="project" value="UniProtKB-UniRule"/>
</dbReference>
<dbReference type="GO" id="GO:0006207">
    <property type="term" value="P:'de novo' pyrimidine nucleobase biosynthetic process"/>
    <property type="evidence" value="ECO:0007669"/>
    <property type="project" value="InterPro"/>
</dbReference>
<dbReference type="GO" id="GO:0044205">
    <property type="term" value="P:'de novo' UMP biosynthetic process"/>
    <property type="evidence" value="ECO:0007669"/>
    <property type="project" value="UniProtKB-UniRule"/>
</dbReference>
<dbReference type="CDD" id="cd04725">
    <property type="entry name" value="OMP_decarboxylase_like"/>
    <property type="match status" value="1"/>
</dbReference>
<dbReference type="FunFam" id="3.20.20.70:FF:000015">
    <property type="entry name" value="Orotidine 5'-phosphate decarboxylase"/>
    <property type="match status" value="1"/>
</dbReference>
<dbReference type="Gene3D" id="3.20.20.70">
    <property type="entry name" value="Aldolase class I"/>
    <property type="match status" value="1"/>
</dbReference>
<dbReference type="HAMAP" id="MF_01200_B">
    <property type="entry name" value="OMPdecase_type1_B"/>
    <property type="match status" value="1"/>
</dbReference>
<dbReference type="InterPro" id="IPR013785">
    <property type="entry name" value="Aldolase_TIM"/>
</dbReference>
<dbReference type="InterPro" id="IPR014732">
    <property type="entry name" value="OMPdecase"/>
</dbReference>
<dbReference type="InterPro" id="IPR018089">
    <property type="entry name" value="OMPdecase_AS"/>
</dbReference>
<dbReference type="InterPro" id="IPR047596">
    <property type="entry name" value="OMPdecase_bac"/>
</dbReference>
<dbReference type="InterPro" id="IPR001754">
    <property type="entry name" value="OMPdeCOase_dom"/>
</dbReference>
<dbReference type="InterPro" id="IPR011060">
    <property type="entry name" value="RibuloseP-bd_barrel"/>
</dbReference>
<dbReference type="NCBIfam" id="NF001273">
    <property type="entry name" value="PRK00230.1"/>
    <property type="match status" value="1"/>
</dbReference>
<dbReference type="NCBIfam" id="TIGR01740">
    <property type="entry name" value="pyrF"/>
    <property type="match status" value="1"/>
</dbReference>
<dbReference type="PANTHER" id="PTHR32119">
    <property type="entry name" value="OROTIDINE 5'-PHOSPHATE DECARBOXYLASE"/>
    <property type="match status" value="1"/>
</dbReference>
<dbReference type="PANTHER" id="PTHR32119:SF2">
    <property type="entry name" value="OROTIDINE 5'-PHOSPHATE DECARBOXYLASE"/>
    <property type="match status" value="1"/>
</dbReference>
<dbReference type="Pfam" id="PF00215">
    <property type="entry name" value="OMPdecase"/>
    <property type="match status" value="1"/>
</dbReference>
<dbReference type="SMART" id="SM00934">
    <property type="entry name" value="OMPdecase"/>
    <property type="match status" value="1"/>
</dbReference>
<dbReference type="SUPFAM" id="SSF51366">
    <property type="entry name" value="Ribulose-phoshate binding barrel"/>
    <property type="match status" value="1"/>
</dbReference>
<dbReference type="PROSITE" id="PS00156">
    <property type="entry name" value="OMPDECASE"/>
    <property type="match status" value="1"/>
</dbReference>
<comment type="function">
    <text evidence="1">Catalyzes the decarboxylation of orotidine 5'-monophosphate (OMP) to uridine 5'-monophosphate (UMP).</text>
</comment>
<comment type="catalytic activity">
    <reaction evidence="1">
        <text>orotidine 5'-phosphate + H(+) = UMP + CO2</text>
        <dbReference type="Rhea" id="RHEA:11596"/>
        <dbReference type="ChEBI" id="CHEBI:15378"/>
        <dbReference type="ChEBI" id="CHEBI:16526"/>
        <dbReference type="ChEBI" id="CHEBI:57538"/>
        <dbReference type="ChEBI" id="CHEBI:57865"/>
        <dbReference type="EC" id="4.1.1.23"/>
    </reaction>
</comment>
<comment type="pathway">
    <text evidence="1">Pyrimidine metabolism; UMP biosynthesis via de novo pathway; UMP from orotate: step 2/2.</text>
</comment>
<comment type="subunit">
    <text evidence="1">Homodimer.</text>
</comment>
<comment type="similarity">
    <text evidence="1">Belongs to the OMP decarboxylase family. Type 1 subfamily.</text>
</comment>
<gene>
    <name evidence="1" type="primary">pyrF</name>
    <name type="ordered locus">Tola_1553</name>
</gene>
<feature type="chain" id="PRO_1000213828" description="Orotidine 5'-phosphate decarboxylase">
    <location>
        <begin position="1"/>
        <end position="232"/>
    </location>
</feature>
<feature type="active site" description="Proton donor" evidence="1">
    <location>
        <position position="62"/>
    </location>
</feature>
<feature type="binding site" evidence="1">
    <location>
        <position position="11"/>
    </location>
    <ligand>
        <name>substrate</name>
    </ligand>
</feature>
<feature type="binding site" evidence="1">
    <location>
        <position position="33"/>
    </location>
    <ligand>
        <name>substrate</name>
    </ligand>
</feature>
<feature type="binding site" evidence="1">
    <location>
        <begin position="60"/>
        <end position="69"/>
    </location>
    <ligand>
        <name>substrate</name>
    </ligand>
</feature>
<feature type="binding site" evidence="1">
    <location>
        <position position="120"/>
    </location>
    <ligand>
        <name>substrate</name>
    </ligand>
</feature>
<feature type="binding site" evidence="1">
    <location>
        <position position="181"/>
    </location>
    <ligand>
        <name>substrate</name>
    </ligand>
</feature>
<feature type="binding site" evidence="1">
    <location>
        <position position="191"/>
    </location>
    <ligand>
        <name>substrate</name>
    </ligand>
</feature>
<feature type="binding site" evidence="1">
    <location>
        <position position="211"/>
    </location>
    <ligand>
        <name>substrate</name>
    </ligand>
</feature>
<feature type="binding site" evidence="1">
    <location>
        <position position="212"/>
    </location>
    <ligand>
        <name>substrate</name>
    </ligand>
</feature>
<protein>
    <recommendedName>
        <fullName evidence="1">Orotidine 5'-phosphate decarboxylase</fullName>
        <ecNumber evidence="1">4.1.1.23</ecNumber>
    </recommendedName>
    <alternativeName>
        <fullName evidence="1">OMP decarboxylase</fullName>
        <shortName evidence="1">OMPDCase</shortName>
        <shortName evidence="1">OMPdecase</shortName>
    </alternativeName>
</protein>
<accession>C4LEZ7</accession>
<keyword id="KW-0210">Decarboxylase</keyword>
<keyword id="KW-0456">Lyase</keyword>
<keyword id="KW-0665">Pyrimidine biosynthesis</keyword>
<keyword id="KW-1185">Reference proteome</keyword>
<reference key="1">
    <citation type="submission" date="2009-05" db="EMBL/GenBank/DDBJ databases">
        <title>Complete sequence of Tolumonas auensis DSM 9187.</title>
        <authorList>
            <consortium name="US DOE Joint Genome Institute"/>
            <person name="Lucas S."/>
            <person name="Copeland A."/>
            <person name="Lapidus A."/>
            <person name="Glavina del Rio T."/>
            <person name="Tice H."/>
            <person name="Bruce D."/>
            <person name="Goodwin L."/>
            <person name="Pitluck S."/>
            <person name="Chertkov O."/>
            <person name="Brettin T."/>
            <person name="Detter J.C."/>
            <person name="Han C."/>
            <person name="Larimer F."/>
            <person name="Land M."/>
            <person name="Hauser L."/>
            <person name="Kyrpides N."/>
            <person name="Mikhailova N."/>
            <person name="Spring S."/>
            <person name="Beller H."/>
        </authorList>
    </citation>
    <scope>NUCLEOTIDE SEQUENCE [LARGE SCALE GENOMIC DNA]</scope>
    <source>
        <strain>DSM 9187 / NBRC 110442 / TA 4</strain>
    </source>
</reference>
<name>PYRF_TOLAT</name>